<reference key="1">
    <citation type="journal article" date="2006" name="Proc. Natl. Acad. Sci. U.S.A.">
        <title>Comparative genomics of the lactic acid bacteria.</title>
        <authorList>
            <person name="Makarova K.S."/>
            <person name="Slesarev A."/>
            <person name="Wolf Y.I."/>
            <person name="Sorokin A."/>
            <person name="Mirkin B."/>
            <person name="Koonin E.V."/>
            <person name="Pavlov A."/>
            <person name="Pavlova N."/>
            <person name="Karamychev V."/>
            <person name="Polouchine N."/>
            <person name="Shakhova V."/>
            <person name="Grigoriev I."/>
            <person name="Lou Y."/>
            <person name="Rohksar D."/>
            <person name="Lucas S."/>
            <person name="Huang K."/>
            <person name="Goodstein D.M."/>
            <person name="Hawkins T."/>
            <person name="Plengvidhya V."/>
            <person name="Welker D."/>
            <person name="Hughes J."/>
            <person name="Goh Y."/>
            <person name="Benson A."/>
            <person name="Baldwin K."/>
            <person name="Lee J.-H."/>
            <person name="Diaz-Muniz I."/>
            <person name="Dosti B."/>
            <person name="Smeianov V."/>
            <person name="Wechter W."/>
            <person name="Barabote R."/>
            <person name="Lorca G."/>
            <person name="Altermann E."/>
            <person name="Barrangou R."/>
            <person name="Ganesan B."/>
            <person name="Xie Y."/>
            <person name="Rawsthorne H."/>
            <person name="Tamir D."/>
            <person name="Parker C."/>
            <person name="Breidt F."/>
            <person name="Broadbent J.R."/>
            <person name="Hutkins R."/>
            <person name="O'Sullivan D."/>
            <person name="Steele J."/>
            <person name="Unlu G."/>
            <person name="Saier M.H. Jr."/>
            <person name="Klaenhammer T."/>
            <person name="Richardson P."/>
            <person name="Kozyavkin S."/>
            <person name="Weimer B.C."/>
            <person name="Mills D.A."/>
        </authorList>
    </citation>
    <scope>NUCLEOTIDE SEQUENCE [LARGE SCALE GENOMIC DNA]</scope>
    <source>
        <strain>ATCC 367 / BCRC 12310 / CIP 105137 / JCM 1170 / LMG 11437 / NCIMB 947 / NCTC 947</strain>
    </source>
</reference>
<gene>
    <name type="primary">alr</name>
    <name type="ordered locus">LVIS_0508</name>
</gene>
<organism>
    <name type="scientific">Levilactobacillus brevis (strain ATCC 367 / BCRC 12310 / CIP 105137 / JCM 1170 / LMG 11437 / NCIMB 947 / NCTC 947)</name>
    <name type="common">Lactobacillus brevis</name>
    <dbReference type="NCBI Taxonomy" id="387344"/>
    <lineage>
        <taxon>Bacteria</taxon>
        <taxon>Bacillati</taxon>
        <taxon>Bacillota</taxon>
        <taxon>Bacilli</taxon>
        <taxon>Lactobacillales</taxon>
        <taxon>Lactobacillaceae</taxon>
        <taxon>Levilactobacillus</taxon>
    </lineage>
</organism>
<sequence length="373" mass="40412">MVVGVHRPTQLVIDRQALHDNIQAEVTRLASGCELFMVVKANGYGHGAVQVAQVAKEAGATGFCVAILDEALELRAAGFNEPILVLGVTEPEDAPLMAQQHISATVAATDWLVAADAYLALAQPTAPLQVHLGLDTGMGRIGFKTTTELTTAVSYLATHATLNFEGIFTHFATADSPDETYFKQQVAKWQTLTAALKERPRYVHVSNSATSLWHAACNDNMVRFGVAGYGLNPSGTAIPAPYALKPALSLTSQLVHSKQVVAGESVGYGATYTAQQTEWVGTVPIGYADGYERRLQGFHVLVDGQACEIIGRVCMDQLMIRLPHDYARGTRVTLIGRDGDHVITLQEMADYCQTIHYELACGFTSRLPRVYRH</sequence>
<feature type="chain" id="PRO_1000065996" description="Alanine racemase">
    <location>
        <begin position="1"/>
        <end position="373"/>
    </location>
</feature>
<feature type="active site" description="Proton acceptor; specific for D-alanine" evidence="1">
    <location>
        <position position="40"/>
    </location>
</feature>
<feature type="active site" description="Proton acceptor; specific for L-alanine" evidence="1">
    <location>
        <position position="268"/>
    </location>
</feature>
<feature type="binding site" evidence="1">
    <location>
        <position position="140"/>
    </location>
    <ligand>
        <name>substrate</name>
    </ligand>
</feature>
<feature type="binding site" evidence="1">
    <location>
        <position position="315"/>
    </location>
    <ligand>
        <name>substrate</name>
    </ligand>
</feature>
<feature type="modified residue" description="N6-(pyridoxal phosphate)lysine" evidence="1">
    <location>
        <position position="40"/>
    </location>
</feature>
<comment type="function">
    <text evidence="1">Catalyzes the interconversion of L-alanine and D-alanine. May also act on other amino acids.</text>
</comment>
<comment type="catalytic activity">
    <reaction evidence="1">
        <text>L-alanine = D-alanine</text>
        <dbReference type="Rhea" id="RHEA:20249"/>
        <dbReference type="ChEBI" id="CHEBI:57416"/>
        <dbReference type="ChEBI" id="CHEBI:57972"/>
        <dbReference type="EC" id="5.1.1.1"/>
    </reaction>
</comment>
<comment type="cofactor">
    <cofactor evidence="1">
        <name>pyridoxal 5'-phosphate</name>
        <dbReference type="ChEBI" id="CHEBI:597326"/>
    </cofactor>
</comment>
<comment type="pathway">
    <text evidence="1">Amino-acid biosynthesis; D-alanine biosynthesis; D-alanine from L-alanine: step 1/1.</text>
</comment>
<comment type="similarity">
    <text evidence="1">Belongs to the alanine racemase family.</text>
</comment>
<keyword id="KW-0413">Isomerase</keyword>
<keyword id="KW-0663">Pyridoxal phosphate</keyword>
<keyword id="KW-1185">Reference proteome</keyword>
<evidence type="ECO:0000255" key="1">
    <source>
        <dbReference type="HAMAP-Rule" id="MF_01201"/>
    </source>
</evidence>
<accession>Q03T06</accession>
<dbReference type="EC" id="5.1.1.1" evidence="1"/>
<dbReference type="EMBL" id="CP000416">
    <property type="protein sequence ID" value="ABJ63666.1"/>
    <property type="molecule type" value="Genomic_DNA"/>
</dbReference>
<dbReference type="RefSeq" id="WP_011667292.1">
    <property type="nucleotide sequence ID" value="NC_008497.1"/>
</dbReference>
<dbReference type="SMR" id="Q03T06"/>
<dbReference type="STRING" id="387344.LVIS_0508"/>
<dbReference type="KEGG" id="lbr:LVIS_0508"/>
<dbReference type="eggNOG" id="COG0787">
    <property type="taxonomic scope" value="Bacteria"/>
</dbReference>
<dbReference type="HOGENOM" id="CLU_028393_2_1_9"/>
<dbReference type="UniPathway" id="UPA00042">
    <property type="reaction ID" value="UER00497"/>
</dbReference>
<dbReference type="Proteomes" id="UP000001652">
    <property type="component" value="Chromosome"/>
</dbReference>
<dbReference type="GO" id="GO:0005829">
    <property type="term" value="C:cytosol"/>
    <property type="evidence" value="ECO:0007669"/>
    <property type="project" value="TreeGrafter"/>
</dbReference>
<dbReference type="GO" id="GO:0008784">
    <property type="term" value="F:alanine racemase activity"/>
    <property type="evidence" value="ECO:0007669"/>
    <property type="project" value="UniProtKB-UniRule"/>
</dbReference>
<dbReference type="GO" id="GO:0030170">
    <property type="term" value="F:pyridoxal phosphate binding"/>
    <property type="evidence" value="ECO:0007669"/>
    <property type="project" value="UniProtKB-UniRule"/>
</dbReference>
<dbReference type="GO" id="GO:0030632">
    <property type="term" value="P:D-alanine biosynthetic process"/>
    <property type="evidence" value="ECO:0007669"/>
    <property type="project" value="UniProtKB-UniRule"/>
</dbReference>
<dbReference type="GO" id="GO:0009252">
    <property type="term" value="P:peptidoglycan biosynthetic process"/>
    <property type="evidence" value="ECO:0007669"/>
    <property type="project" value="TreeGrafter"/>
</dbReference>
<dbReference type="CDD" id="cd00430">
    <property type="entry name" value="PLPDE_III_AR"/>
    <property type="match status" value="1"/>
</dbReference>
<dbReference type="FunFam" id="2.40.37.10:FF:000006">
    <property type="entry name" value="Alanine racemase"/>
    <property type="match status" value="1"/>
</dbReference>
<dbReference type="FunFam" id="3.20.20.10:FF:000002">
    <property type="entry name" value="Alanine racemase"/>
    <property type="match status" value="1"/>
</dbReference>
<dbReference type="Gene3D" id="3.20.20.10">
    <property type="entry name" value="Alanine racemase"/>
    <property type="match status" value="1"/>
</dbReference>
<dbReference type="Gene3D" id="2.40.37.10">
    <property type="entry name" value="Lyase, Ornithine Decarboxylase, Chain A, domain 1"/>
    <property type="match status" value="1"/>
</dbReference>
<dbReference type="HAMAP" id="MF_01201">
    <property type="entry name" value="Ala_racemase"/>
    <property type="match status" value="1"/>
</dbReference>
<dbReference type="InterPro" id="IPR000821">
    <property type="entry name" value="Ala_racemase"/>
</dbReference>
<dbReference type="InterPro" id="IPR009006">
    <property type="entry name" value="Ala_racemase/Decarboxylase_C"/>
</dbReference>
<dbReference type="InterPro" id="IPR011079">
    <property type="entry name" value="Ala_racemase_C"/>
</dbReference>
<dbReference type="InterPro" id="IPR001608">
    <property type="entry name" value="Ala_racemase_N"/>
</dbReference>
<dbReference type="InterPro" id="IPR020622">
    <property type="entry name" value="Ala_racemase_pyridoxalP-BS"/>
</dbReference>
<dbReference type="InterPro" id="IPR029066">
    <property type="entry name" value="PLP-binding_barrel"/>
</dbReference>
<dbReference type="NCBIfam" id="TIGR00492">
    <property type="entry name" value="alr"/>
    <property type="match status" value="1"/>
</dbReference>
<dbReference type="PANTHER" id="PTHR30511">
    <property type="entry name" value="ALANINE RACEMASE"/>
    <property type="match status" value="1"/>
</dbReference>
<dbReference type="PANTHER" id="PTHR30511:SF0">
    <property type="entry name" value="ALANINE RACEMASE, CATABOLIC-RELATED"/>
    <property type="match status" value="1"/>
</dbReference>
<dbReference type="Pfam" id="PF00842">
    <property type="entry name" value="Ala_racemase_C"/>
    <property type="match status" value="1"/>
</dbReference>
<dbReference type="Pfam" id="PF01168">
    <property type="entry name" value="Ala_racemase_N"/>
    <property type="match status" value="1"/>
</dbReference>
<dbReference type="PRINTS" id="PR00992">
    <property type="entry name" value="ALARACEMASE"/>
</dbReference>
<dbReference type="SMART" id="SM01005">
    <property type="entry name" value="Ala_racemase_C"/>
    <property type="match status" value="1"/>
</dbReference>
<dbReference type="SUPFAM" id="SSF50621">
    <property type="entry name" value="Alanine racemase C-terminal domain-like"/>
    <property type="match status" value="1"/>
</dbReference>
<dbReference type="SUPFAM" id="SSF51419">
    <property type="entry name" value="PLP-binding barrel"/>
    <property type="match status" value="1"/>
</dbReference>
<dbReference type="PROSITE" id="PS00395">
    <property type="entry name" value="ALANINE_RACEMASE"/>
    <property type="match status" value="1"/>
</dbReference>
<proteinExistence type="inferred from homology"/>
<name>ALR_LEVBA</name>
<protein>
    <recommendedName>
        <fullName evidence="1">Alanine racemase</fullName>
        <ecNumber evidence="1">5.1.1.1</ecNumber>
    </recommendedName>
</protein>